<reference key="1">
    <citation type="journal article" date="2006" name="BMC Genomics">
        <title>Complete genome sequence of Shigella flexneri 5b and comparison with Shigella flexneri 2a.</title>
        <authorList>
            <person name="Nie H."/>
            <person name="Yang F."/>
            <person name="Zhang X."/>
            <person name="Yang J."/>
            <person name="Chen L."/>
            <person name="Wang J."/>
            <person name="Xiong Z."/>
            <person name="Peng J."/>
            <person name="Sun L."/>
            <person name="Dong J."/>
            <person name="Xue Y."/>
            <person name="Xu X."/>
            <person name="Chen S."/>
            <person name="Yao Z."/>
            <person name="Shen Y."/>
            <person name="Jin Q."/>
        </authorList>
    </citation>
    <scope>NUCLEOTIDE SEQUENCE [LARGE SCALE GENOMIC DNA]</scope>
    <source>
        <strain>8401</strain>
    </source>
</reference>
<proteinExistence type="inferred from homology"/>
<name>GLGX_SHIF8</name>
<protein>
    <recommendedName>
        <fullName evidence="1">Glycogen debranching enzyme</fullName>
        <ecNumber evidence="1">3.2.1.196</ecNumber>
    </recommendedName>
    <alternativeName>
        <fullName evidence="1">Limit dextrin alpha-1,6-maltotetraose-hydrolase</fullName>
    </alternativeName>
</protein>
<gene>
    <name evidence="1" type="primary">glgX</name>
    <name type="ordered locus">SFV_3440</name>
</gene>
<evidence type="ECO:0000255" key="1">
    <source>
        <dbReference type="HAMAP-Rule" id="MF_01248"/>
    </source>
</evidence>
<evidence type="ECO:0000256" key="2">
    <source>
        <dbReference type="SAM" id="MobiDB-lite"/>
    </source>
</evidence>
<accession>Q0SZN3</accession>
<comment type="function">
    <text evidence="1">Removes maltotriose and maltotetraose chains that are attached by 1,6-alpha-linkage to the limit dextrin main chain, generating a debranched limit dextrin.</text>
</comment>
<comment type="catalytic activity">
    <reaction evidence="1">
        <text>Hydrolysis of (1-&gt;6)-alpha-D-glucosidic linkages to branches with degrees of polymerization of three or four glucose residues in limit dextrin.</text>
        <dbReference type="EC" id="3.2.1.196"/>
    </reaction>
</comment>
<comment type="pathway">
    <text evidence="1">Glycan degradation; glycogen degradation.</text>
</comment>
<comment type="similarity">
    <text evidence="1">Belongs to the glycosyl hydrolase 13 family.</text>
</comment>
<keyword id="KW-0119">Carbohydrate metabolism</keyword>
<keyword id="KW-0321">Glycogen metabolism</keyword>
<keyword id="KW-0326">Glycosidase</keyword>
<keyword id="KW-0378">Hydrolase</keyword>
<dbReference type="EC" id="3.2.1.196" evidence="1"/>
<dbReference type="EMBL" id="CP000266">
    <property type="protein sequence ID" value="ABF05482.1"/>
    <property type="molecule type" value="Genomic_DNA"/>
</dbReference>
<dbReference type="RefSeq" id="WP_000192556.1">
    <property type="nucleotide sequence ID" value="NC_008258.1"/>
</dbReference>
<dbReference type="SMR" id="Q0SZN3"/>
<dbReference type="CAZy" id="CBM48">
    <property type="family name" value="Carbohydrate-Binding Module Family 48"/>
</dbReference>
<dbReference type="CAZy" id="GH13">
    <property type="family name" value="Glycoside Hydrolase Family 13"/>
</dbReference>
<dbReference type="KEGG" id="sfv:SFV_3440"/>
<dbReference type="HOGENOM" id="CLU_011725_1_1_6"/>
<dbReference type="UniPathway" id="UPA00165"/>
<dbReference type="Proteomes" id="UP000000659">
    <property type="component" value="Chromosome"/>
</dbReference>
<dbReference type="GO" id="GO:0004133">
    <property type="term" value="F:glycogen debranching enzyme activity"/>
    <property type="evidence" value="ECO:0007669"/>
    <property type="project" value="UniProtKB-UniRule"/>
</dbReference>
<dbReference type="GO" id="GO:0004553">
    <property type="term" value="F:hydrolase activity, hydrolyzing O-glycosyl compounds"/>
    <property type="evidence" value="ECO:0007669"/>
    <property type="project" value="InterPro"/>
</dbReference>
<dbReference type="GO" id="GO:0005980">
    <property type="term" value="P:glycogen catabolic process"/>
    <property type="evidence" value="ECO:0007669"/>
    <property type="project" value="UniProtKB-UniRule"/>
</dbReference>
<dbReference type="CDD" id="cd11326">
    <property type="entry name" value="AmyAc_Glg_debranch"/>
    <property type="match status" value="1"/>
</dbReference>
<dbReference type="CDD" id="cd02856">
    <property type="entry name" value="E_set_GDE_Isoamylase_N"/>
    <property type="match status" value="1"/>
</dbReference>
<dbReference type="FunFam" id="2.60.40.10:FF:000468">
    <property type="entry name" value="Glycogen debranching enzyme"/>
    <property type="match status" value="1"/>
</dbReference>
<dbReference type="FunFam" id="3.20.20.80:FF:000031">
    <property type="entry name" value="Glycogen debranching enzyme"/>
    <property type="match status" value="1"/>
</dbReference>
<dbReference type="Gene3D" id="3.20.20.80">
    <property type="entry name" value="Glycosidases"/>
    <property type="match status" value="1"/>
</dbReference>
<dbReference type="Gene3D" id="2.60.40.1180">
    <property type="entry name" value="Golgi alpha-mannosidase II"/>
    <property type="match status" value="1"/>
</dbReference>
<dbReference type="Gene3D" id="2.60.40.10">
    <property type="entry name" value="Immunoglobulins"/>
    <property type="match status" value="1"/>
</dbReference>
<dbReference type="HAMAP" id="MF_01248">
    <property type="entry name" value="GlgX"/>
    <property type="match status" value="1"/>
</dbReference>
<dbReference type="InterPro" id="IPR040784">
    <property type="entry name" value="GlgX_C"/>
</dbReference>
<dbReference type="InterPro" id="IPR044505">
    <property type="entry name" value="GlgX_Isoamylase_N_E_set"/>
</dbReference>
<dbReference type="InterPro" id="IPR006047">
    <property type="entry name" value="Glyco_hydro_13_cat_dom"/>
</dbReference>
<dbReference type="InterPro" id="IPR004193">
    <property type="entry name" value="Glyco_hydro_13_N"/>
</dbReference>
<dbReference type="InterPro" id="IPR013780">
    <property type="entry name" value="Glyco_hydro_b"/>
</dbReference>
<dbReference type="InterPro" id="IPR022844">
    <property type="entry name" value="Glycogen_debranch_bac"/>
</dbReference>
<dbReference type="InterPro" id="IPR011837">
    <property type="entry name" value="Glycogen_debranch_GlgX"/>
</dbReference>
<dbReference type="InterPro" id="IPR017853">
    <property type="entry name" value="Glycoside_hydrolase_SF"/>
</dbReference>
<dbReference type="InterPro" id="IPR013783">
    <property type="entry name" value="Ig-like_fold"/>
</dbReference>
<dbReference type="InterPro" id="IPR014756">
    <property type="entry name" value="Ig_E-set"/>
</dbReference>
<dbReference type="NCBIfam" id="TIGR02100">
    <property type="entry name" value="glgX_debranch"/>
    <property type="match status" value="1"/>
</dbReference>
<dbReference type="NCBIfam" id="NF002983">
    <property type="entry name" value="PRK03705.1"/>
    <property type="match status" value="1"/>
</dbReference>
<dbReference type="PANTHER" id="PTHR43002">
    <property type="entry name" value="GLYCOGEN DEBRANCHING ENZYME"/>
    <property type="match status" value="1"/>
</dbReference>
<dbReference type="Pfam" id="PF00128">
    <property type="entry name" value="Alpha-amylase"/>
    <property type="match status" value="1"/>
</dbReference>
<dbReference type="Pfam" id="PF02922">
    <property type="entry name" value="CBM_48"/>
    <property type="match status" value="1"/>
</dbReference>
<dbReference type="Pfam" id="PF18390">
    <property type="entry name" value="GlgX_C"/>
    <property type="match status" value="1"/>
</dbReference>
<dbReference type="SMART" id="SM00642">
    <property type="entry name" value="Aamy"/>
    <property type="match status" value="1"/>
</dbReference>
<dbReference type="SUPFAM" id="SSF51445">
    <property type="entry name" value="(Trans)glycosidases"/>
    <property type="match status" value="1"/>
</dbReference>
<dbReference type="SUPFAM" id="SSF81296">
    <property type="entry name" value="E set domains"/>
    <property type="match status" value="1"/>
</dbReference>
<feature type="chain" id="PRO_1000067107" description="Glycogen debranching enzyme">
    <location>
        <begin position="1"/>
        <end position="657"/>
    </location>
</feature>
<feature type="region of interest" description="Disordered" evidence="2">
    <location>
        <begin position="460"/>
        <end position="479"/>
    </location>
</feature>
<feature type="active site" description="Nucleophile" evidence="1">
    <location>
        <position position="336"/>
    </location>
</feature>
<feature type="active site" description="Proton donor" evidence="1">
    <location>
        <position position="371"/>
    </location>
</feature>
<feature type="site" description="Transition state stabilizer" evidence="1">
    <location>
        <position position="443"/>
    </location>
</feature>
<organism>
    <name type="scientific">Shigella flexneri serotype 5b (strain 8401)</name>
    <dbReference type="NCBI Taxonomy" id="373384"/>
    <lineage>
        <taxon>Bacteria</taxon>
        <taxon>Pseudomonadati</taxon>
        <taxon>Pseudomonadota</taxon>
        <taxon>Gammaproteobacteria</taxon>
        <taxon>Enterobacterales</taxon>
        <taxon>Enterobacteriaceae</taxon>
        <taxon>Shigella</taxon>
    </lineage>
</organism>
<sequence>MTQLAIGKPAPLGAHYDGQGVNFTLFSAHAERVELCVFDANGQEHRYDLPGNSGDIWHGYLPDARPGLRYGYRVHGPWQPAEGHRFNPAKLLIDPCARQIDGEFKDNPLLHAGHNEPDYRDNAAIAPKCVVVVDHYDWEDDAPPRTPWGSTIIYEAHVKGLTYLHPEIPVEIRGTYKALGHPVMINYLKQLGITALELLPVAQFASEPRLQRMGLSNYWGYNPVAMFALHPAYACSPETALDEFRDAIKALHKAGIEVILDIVLNHSAELDLDGPLFSLRGIDNRSYYWIREDGDYHNWTGCGNTLNLSHPAVVDYASACLRYWVETCHVDGFRFDLAAVMGRTPEFRQDAPLFTAIQNCPVLSQVKLIAEPWDIAPSGYQVGNFPPLFAEWNDHFRDAARRFWLHYDLPLGAFAGRFAASSDVFKRNGRLPSAAINLVTAHDGFTLRDCVCFNHKHNEANGEENRDGTNNNYSNNHGKEGLGGTLDLVERRRDSIHALLTTLLLSQGTPMLLAGDEHGHSQHGNNNAYCQDNQLNWLDWSQASSGLTAFTAALIHLRKRIPALVENRWWEEGDGNVRWLNRYAQPLSTDEWQNGPKQLQILLSDRFLIAINATLEVTEIVLPAGEWHAIPPFAGEDNPVITVVWQGPAHGLCVFQR</sequence>